<dbReference type="EC" id="5.4.2.11" evidence="1"/>
<dbReference type="EMBL" id="FM200053">
    <property type="protein sequence ID" value="CAR60044.1"/>
    <property type="molecule type" value="Genomic_DNA"/>
</dbReference>
<dbReference type="RefSeq" id="WP_000301559.1">
    <property type="nucleotide sequence ID" value="NC_011147.1"/>
</dbReference>
<dbReference type="SMR" id="B5BC52"/>
<dbReference type="KEGG" id="sek:SSPA1847"/>
<dbReference type="HOGENOM" id="CLU_033323_1_1_6"/>
<dbReference type="UniPathway" id="UPA00109">
    <property type="reaction ID" value="UER00186"/>
</dbReference>
<dbReference type="Proteomes" id="UP000001869">
    <property type="component" value="Chromosome"/>
</dbReference>
<dbReference type="GO" id="GO:0004619">
    <property type="term" value="F:phosphoglycerate mutase activity"/>
    <property type="evidence" value="ECO:0007669"/>
    <property type="project" value="UniProtKB-EC"/>
</dbReference>
<dbReference type="GO" id="GO:0006094">
    <property type="term" value="P:gluconeogenesis"/>
    <property type="evidence" value="ECO:0007669"/>
    <property type="project" value="UniProtKB-UniRule"/>
</dbReference>
<dbReference type="GO" id="GO:0006096">
    <property type="term" value="P:glycolytic process"/>
    <property type="evidence" value="ECO:0007669"/>
    <property type="project" value="UniProtKB-UniRule"/>
</dbReference>
<dbReference type="CDD" id="cd07067">
    <property type="entry name" value="HP_PGM_like"/>
    <property type="match status" value="1"/>
</dbReference>
<dbReference type="FunFam" id="3.40.50.1240:FF:000003">
    <property type="entry name" value="2,3-bisphosphoglycerate-dependent phosphoglycerate mutase"/>
    <property type="match status" value="1"/>
</dbReference>
<dbReference type="Gene3D" id="3.40.50.1240">
    <property type="entry name" value="Phosphoglycerate mutase-like"/>
    <property type="match status" value="1"/>
</dbReference>
<dbReference type="HAMAP" id="MF_01039">
    <property type="entry name" value="PGAM_GpmA"/>
    <property type="match status" value="1"/>
</dbReference>
<dbReference type="InterPro" id="IPR013078">
    <property type="entry name" value="His_Pase_superF_clade-1"/>
</dbReference>
<dbReference type="InterPro" id="IPR029033">
    <property type="entry name" value="His_PPase_superfam"/>
</dbReference>
<dbReference type="InterPro" id="IPR001345">
    <property type="entry name" value="PG/BPGM_mutase_AS"/>
</dbReference>
<dbReference type="InterPro" id="IPR005952">
    <property type="entry name" value="Phosphogly_mut1"/>
</dbReference>
<dbReference type="NCBIfam" id="TIGR01258">
    <property type="entry name" value="pgm_1"/>
    <property type="match status" value="1"/>
</dbReference>
<dbReference type="NCBIfam" id="NF010713">
    <property type="entry name" value="PRK14115.1"/>
    <property type="match status" value="1"/>
</dbReference>
<dbReference type="PANTHER" id="PTHR11931">
    <property type="entry name" value="PHOSPHOGLYCERATE MUTASE"/>
    <property type="match status" value="1"/>
</dbReference>
<dbReference type="Pfam" id="PF00300">
    <property type="entry name" value="His_Phos_1"/>
    <property type="match status" value="1"/>
</dbReference>
<dbReference type="PIRSF" id="PIRSF000709">
    <property type="entry name" value="6PFK_2-Ptase"/>
    <property type="match status" value="1"/>
</dbReference>
<dbReference type="SMART" id="SM00855">
    <property type="entry name" value="PGAM"/>
    <property type="match status" value="1"/>
</dbReference>
<dbReference type="SUPFAM" id="SSF53254">
    <property type="entry name" value="Phosphoglycerate mutase-like"/>
    <property type="match status" value="1"/>
</dbReference>
<dbReference type="PROSITE" id="PS00175">
    <property type="entry name" value="PG_MUTASE"/>
    <property type="match status" value="1"/>
</dbReference>
<gene>
    <name evidence="1" type="primary">gpmA</name>
    <name type="ordered locus">SSPA1847</name>
</gene>
<sequence length="250" mass="28480">MAVTKLVLVRHGESQWNKENRFTGWYDVDLSEKGVSEAKAAGKLLKEEGFSFDFAYTSVLKRAIHTLWNVLDELDQAWLPVEKSWKLNERHYGALQGLNKAETAEKYGDEQVKQWRRGFAVTPPELTKDDERYPGHDPRYAKLSEKELPLTESLALTIDRVIPYWTDTILPRMKSGERVIIAAHGNSLRALVKYLDNMSEDEILELNIPTGVPLVYEFDENFKPLKHYYLGNADEIAAKAAAVANQGKAK</sequence>
<organism>
    <name type="scientific">Salmonella paratyphi A (strain AKU_12601)</name>
    <dbReference type="NCBI Taxonomy" id="554290"/>
    <lineage>
        <taxon>Bacteria</taxon>
        <taxon>Pseudomonadati</taxon>
        <taxon>Pseudomonadota</taxon>
        <taxon>Gammaproteobacteria</taxon>
        <taxon>Enterobacterales</taxon>
        <taxon>Enterobacteriaceae</taxon>
        <taxon>Salmonella</taxon>
    </lineage>
</organism>
<proteinExistence type="inferred from homology"/>
<keyword id="KW-0312">Gluconeogenesis</keyword>
<keyword id="KW-0324">Glycolysis</keyword>
<keyword id="KW-0413">Isomerase</keyword>
<accession>B5BC52</accession>
<feature type="chain" id="PRO_1000135976" description="2,3-bisphosphoglycerate-dependent phosphoglycerate mutase">
    <location>
        <begin position="1"/>
        <end position="250"/>
    </location>
</feature>
<feature type="active site" description="Tele-phosphohistidine intermediate" evidence="1">
    <location>
        <position position="11"/>
    </location>
</feature>
<feature type="active site" description="Proton donor/acceptor" evidence="1">
    <location>
        <position position="89"/>
    </location>
</feature>
<feature type="binding site" evidence="1">
    <location>
        <begin position="10"/>
        <end position="17"/>
    </location>
    <ligand>
        <name>substrate</name>
    </ligand>
</feature>
<feature type="binding site" evidence="1">
    <location>
        <begin position="23"/>
        <end position="24"/>
    </location>
    <ligand>
        <name>substrate</name>
    </ligand>
</feature>
<feature type="binding site" evidence="1">
    <location>
        <position position="62"/>
    </location>
    <ligand>
        <name>substrate</name>
    </ligand>
</feature>
<feature type="binding site" evidence="1">
    <location>
        <begin position="89"/>
        <end position="92"/>
    </location>
    <ligand>
        <name>substrate</name>
    </ligand>
</feature>
<feature type="binding site" evidence="1">
    <location>
        <position position="100"/>
    </location>
    <ligand>
        <name>substrate</name>
    </ligand>
</feature>
<feature type="binding site" evidence="1">
    <location>
        <begin position="116"/>
        <end position="117"/>
    </location>
    <ligand>
        <name>substrate</name>
    </ligand>
</feature>
<feature type="binding site" evidence="1">
    <location>
        <begin position="185"/>
        <end position="186"/>
    </location>
    <ligand>
        <name>substrate</name>
    </ligand>
</feature>
<feature type="site" description="Transition state stabilizer" evidence="1">
    <location>
        <position position="184"/>
    </location>
</feature>
<comment type="function">
    <text evidence="1">Catalyzes the interconversion of 2-phosphoglycerate and 3-phosphoglycerate.</text>
</comment>
<comment type="catalytic activity">
    <reaction evidence="1">
        <text>(2R)-2-phosphoglycerate = (2R)-3-phosphoglycerate</text>
        <dbReference type="Rhea" id="RHEA:15901"/>
        <dbReference type="ChEBI" id="CHEBI:58272"/>
        <dbReference type="ChEBI" id="CHEBI:58289"/>
        <dbReference type="EC" id="5.4.2.11"/>
    </reaction>
</comment>
<comment type="pathway">
    <text evidence="1">Carbohydrate degradation; glycolysis; pyruvate from D-glyceraldehyde 3-phosphate: step 3/5.</text>
</comment>
<comment type="subunit">
    <text evidence="1">Homodimer.</text>
</comment>
<comment type="similarity">
    <text evidence="1">Belongs to the phosphoglycerate mutase family. BPG-dependent PGAM subfamily.</text>
</comment>
<evidence type="ECO:0000255" key="1">
    <source>
        <dbReference type="HAMAP-Rule" id="MF_01039"/>
    </source>
</evidence>
<name>GPMA_SALPK</name>
<protein>
    <recommendedName>
        <fullName evidence="1">2,3-bisphosphoglycerate-dependent phosphoglycerate mutase</fullName>
        <shortName evidence="1">BPG-dependent PGAM</shortName>
        <shortName evidence="1">PGAM</shortName>
        <shortName evidence="1">Phosphoglyceromutase</shortName>
        <shortName evidence="1">dPGM</shortName>
        <ecNumber evidence="1">5.4.2.11</ecNumber>
    </recommendedName>
</protein>
<reference key="1">
    <citation type="journal article" date="2009" name="BMC Genomics">
        <title>Pseudogene accumulation in the evolutionary histories of Salmonella enterica serovars Paratyphi A and Typhi.</title>
        <authorList>
            <person name="Holt K.E."/>
            <person name="Thomson N.R."/>
            <person name="Wain J."/>
            <person name="Langridge G.C."/>
            <person name="Hasan R."/>
            <person name="Bhutta Z.A."/>
            <person name="Quail M.A."/>
            <person name="Norbertczak H."/>
            <person name="Walker D."/>
            <person name="Simmonds M."/>
            <person name="White B."/>
            <person name="Bason N."/>
            <person name="Mungall K."/>
            <person name="Dougan G."/>
            <person name="Parkhill J."/>
        </authorList>
    </citation>
    <scope>NUCLEOTIDE SEQUENCE [LARGE SCALE GENOMIC DNA]</scope>
    <source>
        <strain>AKU_12601</strain>
    </source>
</reference>